<organism>
    <name type="scientific">Bacteroides fragilis (strain YCH46)</name>
    <dbReference type="NCBI Taxonomy" id="295405"/>
    <lineage>
        <taxon>Bacteria</taxon>
        <taxon>Pseudomonadati</taxon>
        <taxon>Bacteroidota</taxon>
        <taxon>Bacteroidia</taxon>
        <taxon>Bacteroidales</taxon>
        <taxon>Bacteroidaceae</taxon>
        <taxon>Bacteroides</taxon>
    </lineage>
</organism>
<keyword id="KW-0963">Cytoplasm</keyword>
<keyword id="KW-0671">Queuosine biosynthesis</keyword>
<keyword id="KW-0949">S-adenosyl-L-methionine</keyword>
<keyword id="KW-0808">Transferase</keyword>
<feature type="chain" id="PRO_0000231318" description="S-adenosylmethionine:tRNA ribosyltransferase-isomerase">
    <location>
        <begin position="1"/>
        <end position="352"/>
    </location>
</feature>
<evidence type="ECO:0000255" key="1">
    <source>
        <dbReference type="HAMAP-Rule" id="MF_00113"/>
    </source>
</evidence>
<sequence>MKLSQFKFKLPEEKIALHPTKYRDESRLMVLHKRTGEIEHKMFKDILNYFDDKDVFVFNDTKVFPARLYGNKEKTGARIEVFLLRELNEELRLWDVLVDPARKIRIGNKLYFGDDDSMVAEVIDNTTSRGRTLRFLYDGPHDEFKKALYALGETPLPHTILNRPVEEEDAERFQSIFAKNEGAVTAPTASLHFSRELMKRMEIKGIDFAYITLHAGLGNFRDIDVEDLTKHKMDSEQMFVTEEAVKIVNRAKDLGKNVCAVGTTVMRAIESTVSTDGHLKEYEGWTNKFIFPPYDFTVANAMVSNFHMPLSTLLMIVAAFGGYDQVMDAYHIALKEGYRFGTYGDAMLILDK</sequence>
<gene>
    <name evidence="1" type="primary">queA</name>
    <name type="ordered locus">BF0058</name>
</gene>
<reference key="1">
    <citation type="journal article" date="2004" name="Proc. Natl. Acad. Sci. U.S.A.">
        <title>Genomic analysis of Bacteroides fragilis reveals extensive DNA inversions regulating cell surface adaptation.</title>
        <authorList>
            <person name="Kuwahara T."/>
            <person name="Yamashita A."/>
            <person name="Hirakawa H."/>
            <person name="Nakayama H."/>
            <person name="Toh H."/>
            <person name="Okada N."/>
            <person name="Kuhara S."/>
            <person name="Hattori M."/>
            <person name="Hayashi T."/>
            <person name="Ohnishi Y."/>
        </authorList>
    </citation>
    <scope>NUCLEOTIDE SEQUENCE [LARGE SCALE GENOMIC DNA]</scope>
    <source>
        <strain>YCH46</strain>
    </source>
</reference>
<protein>
    <recommendedName>
        <fullName evidence="1">S-adenosylmethionine:tRNA ribosyltransferase-isomerase</fullName>
        <ecNumber evidence="1">2.4.99.17</ecNumber>
    </recommendedName>
    <alternativeName>
        <fullName evidence="1">Queuosine biosynthesis protein QueA</fullName>
    </alternativeName>
</protein>
<name>QUEA_BACFR</name>
<accession>Q650L7</accession>
<comment type="function">
    <text evidence="1">Transfers and isomerizes the ribose moiety from AdoMet to the 7-aminomethyl group of 7-deazaguanine (preQ1-tRNA) to give epoxyqueuosine (oQ-tRNA).</text>
</comment>
<comment type="catalytic activity">
    <reaction evidence="1">
        <text>7-aminomethyl-7-carbaguanosine(34) in tRNA + S-adenosyl-L-methionine = epoxyqueuosine(34) in tRNA + adenine + L-methionine + 2 H(+)</text>
        <dbReference type="Rhea" id="RHEA:32155"/>
        <dbReference type="Rhea" id="RHEA-COMP:10342"/>
        <dbReference type="Rhea" id="RHEA-COMP:18582"/>
        <dbReference type="ChEBI" id="CHEBI:15378"/>
        <dbReference type="ChEBI" id="CHEBI:16708"/>
        <dbReference type="ChEBI" id="CHEBI:57844"/>
        <dbReference type="ChEBI" id="CHEBI:59789"/>
        <dbReference type="ChEBI" id="CHEBI:82833"/>
        <dbReference type="ChEBI" id="CHEBI:194443"/>
        <dbReference type="EC" id="2.4.99.17"/>
    </reaction>
</comment>
<comment type="pathway">
    <text evidence="1">tRNA modification; tRNA-queuosine biosynthesis.</text>
</comment>
<comment type="subunit">
    <text evidence="1">Monomer.</text>
</comment>
<comment type="subcellular location">
    <subcellularLocation>
        <location evidence="1">Cytoplasm</location>
    </subcellularLocation>
</comment>
<comment type="similarity">
    <text evidence="1">Belongs to the QueA family.</text>
</comment>
<dbReference type="EC" id="2.4.99.17" evidence="1"/>
<dbReference type="EMBL" id="AP006841">
    <property type="protein sequence ID" value="BAD46807.1"/>
    <property type="molecule type" value="Genomic_DNA"/>
</dbReference>
<dbReference type="RefSeq" id="WP_005783637.1">
    <property type="nucleotide sequence ID" value="NZ_UYXF01000012.1"/>
</dbReference>
<dbReference type="RefSeq" id="YP_097341.1">
    <property type="nucleotide sequence ID" value="NC_006347.1"/>
</dbReference>
<dbReference type="SMR" id="Q650L7"/>
<dbReference type="STRING" id="295405.BF0058"/>
<dbReference type="GeneID" id="60367831"/>
<dbReference type="KEGG" id="bfr:BF0058"/>
<dbReference type="PATRIC" id="fig|295405.11.peg.96"/>
<dbReference type="HOGENOM" id="CLU_039110_1_0_10"/>
<dbReference type="OrthoDB" id="9805933at2"/>
<dbReference type="UniPathway" id="UPA00392"/>
<dbReference type="Proteomes" id="UP000002197">
    <property type="component" value="Chromosome"/>
</dbReference>
<dbReference type="GO" id="GO:0005737">
    <property type="term" value="C:cytoplasm"/>
    <property type="evidence" value="ECO:0007669"/>
    <property type="project" value="UniProtKB-SubCell"/>
</dbReference>
<dbReference type="GO" id="GO:0051075">
    <property type="term" value="F:S-adenosylmethionine:tRNA ribosyltransferase-isomerase activity"/>
    <property type="evidence" value="ECO:0007669"/>
    <property type="project" value="UniProtKB-EC"/>
</dbReference>
<dbReference type="GO" id="GO:0008616">
    <property type="term" value="P:queuosine biosynthetic process"/>
    <property type="evidence" value="ECO:0007669"/>
    <property type="project" value="UniProtKB-UniRule"/>
</dbReference>
<dbReference type="GO" id="GO:0002099">
    <property type="term" value="P:tRNA wobble guanine modification"/>
    <property type="evidence" value="ECO:0007669"/>
    <property type="project" value="TreeGrafter"/>
</dbReference>
<dbReference type="FunFam" id="2.40.10.240:FF:000002">
    <property type="entry name" value="S-adenosylmethionine:tRNA ribosyltransferase-isomerase"/>
    <property type="match status" value="1"/>
</dbReference>
<dbReference type="FunFam" id="3.40.1780.10:FF:000001">
    <property type="entry name" value="S-adenosylmethionine:tRNA ribosyltransferase-isomerase"/>
    <property type="match status" value="1"/>
</dbReference>
<dbReference type="Gene3D" id="2.40.10.240">
    <property type="entry name" value="QueA-like"/>
    <property type="match status" value="1"/>
</dbReference>
<dbReference type="Gene3D" id="3.40.1780.10">
    <property type="entry name" value="QueA-like"/>
    <property type="match status" value="1"/>
</dbReference>
<dbReference type="HAMAP" id="MF_00113">
    <property type="entry name" value="QueA"/>
    <property type="match status" value="1"/>
</dbReference>
<dbReference type="InterPro" id="IPR003699">
    <property type="entry name" value="QueA"/>
</dbReference>
<dbReference type="InterPro" id="IPR042118">
    <property type="entry name" value="QueA_dom1"/>
</dbReference>
<dbReference type="InterPro" id="IPR042119">
    <property type="entry name" value="QueA_dom2"/>
</dbReference>
<dbReference type="InterPro" id="IPR036100">
    <property type="entry name" value="QueA_sf"/>
</dbReference>
<dbReference type="NCBIfam" id="NF001140">
    <property type="entry name" value="PRK00147.1"/>
    <property type="match status" value="1"/>
</dbReference>
<dbReference type="NCBIfam" id="TIGR00113">
    <property type="entry name" value="queA"/>
    <property type="match status" value="1"/>
</dbReference>
<dbReference type="PANTHER" id="PTHR30307">
    <property type="entry name" value="S-ADENOSYLMETHIONINE:TRNA RIBOSYLTRANSFERASE-ISOMERASE"/>
    <property type="match status" value="1"/>
</dbReference>
<dbReference type="PANTHER" id="PTHR30307:SF0">
    <property type="entry name" value="S-ADENOSYLMETHIONINE:TRNA RIBOSYLTRANSFERASE-ISOMERASE"/>
    <property type="match status" value="1"/>
</dbReference>
<dbReference type="Pfam" id="PF02547">
    <property type="entry name" value="Queuosine_synth"/>
    <property type="match status" value="1"/>
</dbReference>
<dbReference type="SUPFAM" id="SSF111337">
    <property type="entry name" value="QueA-like"/>
    <property type="match status" value="1"/>
</dbReference>
<proteinExistence type="inferred from homology"/>